<name>GATC_STRA5</name>
<keyword id="KW-0067">ATP-binding</keyword>
<keyword id="KW-0436">Ligase</keyword>
<keyword id="KW-0547">Nucleotide-binding</keyword>
<keyword id="KW-0648">Protein biosynthesis</keyword>
<keyword id="KW-1185">Reference proteome</keyword>
<evidence type="ECO:0000255" key="1">
    <source>
        <dbReference type="HAMAP-Rule" id="MF_00122"/>
    </source>
</evidence>
<reference key="1">
    <citation type="journal article" date="2002" name="Proc. Natl. Acad. Sci. U.S.A.">
        <title>Complete genome sequence and comparative genomic analysis of an emerging human pathogen, serotype V Streptococcus agalactiae.</title>
        <authorList>
            <person name="Tettelin H."/>
            <person name="Masignani V."/>
            <person name="Cieslewicz M.J."/>
            <person name="Eisen J.A."/>
            <person name="Peterson S.N."/>
            <person name="Wessels M.R."/>
            <person name="Paulsen I.T."/>
            <person name="Nelson K.E."/>
            <person name="Margarit I."/>
            <person name="Read T.D."/>
            <person name="Madoff L.C."/>
            <person name="Wolf A.M."/>
            <person name="Beanan M.J."/>
            <person name="Brinkac L.M."/>
            <person name="Daugherty S.C."/>
            <person name="DeBoy R.T."/>
            <person name="Durkin A.S."/>
            <person name="Kolonay J.F."/>
            <person name="Madupu R."/>
            <person name="Lewis M.R."/>
            <person name="Radune D."/>
            <person name="Fedorova N.B."/>
            <person name="Scanlan D."/>
            <person name="Khouri H.M."/>
            <person name="Mulligan S."/>
            <person name="Carty H.A."/>
            <person name="Cline R.T."/>
            <person name="Van Aken S.E."/>
            <person name="Gill J."/>
            <person name="Scarselli M."/>
            <person name="Mora M."/>
            <person name="Iacobini E.T."/>
            <person name="Brettoni C."/>
            <person name="Galli G."/>
            <person name="Mariani M."/>
            <person name="Vegni F."/>
            <person name="Maione D."/>
            <person name="Rinaudo D."/>
            <person name="Rappuoli R."/>
            <person name="Telford J.L."/>
            <person name="Kasper D.L."/>
            <person name="Grandi G."/>
            <person name="Fraser C.M."/>
        </authorList>
    </citation>
    <scope>NUCLEOTIDE SEQUENCE [LARGE SCALE GENOMIC DNA]</scope>
    <source>
        <strain>ATCC BAA-611 / 2603 V/R</strain>
    </source>
</reference>
<comment type="function">
    <text evidence="1">Allows the formation of correctly charged Asn-tRNA(Asn) or Gln-tRNA(Gln) through the transamidation of misacylated Asp-tRNA(Asn) or Glu-tRNA(Gln) in organisms which lack either or both of asparaginyl-tRNA or glutaminyl-tRNA synthetases. The reaction takes place in the presence of glutamine and ATP through an activated phospho-Asp-tRNA(Asn) or phospho-Glu-tRNA(Gln).</text>
</comment>
<comment type="catalytic activity">
    <reaction evidence="1">
        <text>L-glutamyl-tRNA(Gln) + L-glutamine + ATP + H2O = L-glutaminyl-tRNA(Gln) + L-glutamate + ADP + phosphate + H(+)</text>
        <dbReference type="Rhea" id="RHEA:17521"/>
        <dbReference type="Rhea" id="RHEA-COMP:9681"/>
        <dbReference type="Rhea" id="RHEA-COMP:9684"/>
        <dbReference type="ChEBI" id="CHEBI:15377"/>
        <dbReference type="ChEBI" id="CHEBI:15378"/>
        <dbReference type="ChEBI" id="CHEBI:29985"/>
        <dbReference type="ChEBI" id="CHEBI:30616"/>
        <dbReference type="ChEBI" id="CHEBI:43474"/>
        <dbReference type="ChEBI" id="CHEBI:58359"/>
        <dbReference type="ChEBI" id="CHEBI:78520"/>
        <dbReference type="ChEBI" id="CHEBI:78521"/>
        <dbReference type="ChEBI" id="CHEBI:456216"/>
    </reaction>
</comment>
<comment type="catalytic activity">
    <reaction evidence="1">
        <text>L-aspartyl-tRNA(Asn) + L-glutamine + ATP + H2O = L-asparaginyl-tRNA(Asn) + L-glutamate + ADP + phosphate + 2 H(+)</text>
        <dbReference type="Rhea" id="RHEA:14513"/>
        <dbReference type="Rhea" id="RHEA-COMP:9674"/>
        <dbReference type="Rhea" id="RHEA-COMP:9677"/>
        <dbReference type="ChEBI" id="CHEBI:15377"/>
        <dbReference type="ChEBI" id="CHEBI:15378"/>
        <dbReference type="ChEBI" id="CHEBI:29985"/>
        <dbReference type="ChEBI" id="CHEBI:30616"/>
        <dbReference type="ChEBI" id="CHEBI:43474"/>
        <dbReference type="ChEBI" id="CHEBI:58359"/>
        <dbReference type="ChEBI" id="CHEBI:78515"/>
        <dbReference type="ChEBI" id="CHEBI:78516"/>
        <dbReference type="ChEBI" id="CHEBI:456216"/>
    </reaction>
</comment>
<comment type="subunit">
    <text evidence="1">Heterotrimer of A, B and C subunits.</text>
</comment>
<comment type="similarity">
    <text evidence="1">Belongs to the GatC family.</text>
</comment>
<dbReference type="EC" id="6.3.5.-" evidence="1"/>
<dbReference type="EMBL" id="AE009948">
    <property type="protein sequence ID" value="AAN00533.1"/>
    <property type="molecule type" value="Genomic_DNA"/>
</dbReference>
<dbReference type="RefSeq" id="NP_688660.1">
    <property type="nucleotide sequence ID" value="NC_004116.1"/>
</dbReference>
<dbReference type="RefSeq" id="WP_000703032.1">
    <property type="nucleotide sequence ID" value="NC_004116.1"/>
</dbReference>
<dbReference type="SMR" id="Q8DY24"/>
<dbReference type="STRING" id="208435.SAG1669"/>
<dbReference type="KEGG" id="sag:SAG1669"/>
<dbReference type="PATRIC" id="fig|208435.3.peg.1678"/>
<dbReference type="HOGENOM" id="CLU_105899_1_2_9"/>
<dbReference type="OrthoDB" id="9813938at2"/>
<dbReference type="Proteomes" id="UP000000821">
    <property type="component" value="Chromosome"/>
</dbReference>
<dbReference type="GO" id="GO:0050566">
    <property type="term" value="F:asparaginyl-tRNA synthase (glutamine-hydrolyzing) activity"/>
    <property type="evidence" value="ECO:0007669"/>
    <property type="project" value="RHEA"/>
</dbReference>
<dbReference type="GO" id="GO:0005524">
    <property type="term" value="F:ATP binding"/>
    <property type="evidence" value="ECO:0007669"/>
    <property type="project" value="UniProtKB-KW"/>
</dbReference>
<dbReference type="GO" id="GO:0050567">
    <property type="term" value="F:glutaminyl-tRNA synthase (glutamine-hydrolyzing) activity"/>
    <property type="evidence" value="ECO:0007669"/>
    <property type="project" value="UniProtKB-UniRule"/>
</dbReference>
<dbReference type="GO" id="GO:0070681">
    <property type="term" value="P:glutaminyl-tRNAGln biosynthesis via transamidation"/>
    <property type="evidence" value="ECO:0007669"/>
    <property type="project" value="TreeGrafter"/>
</dbReference>
<dbReference type="GO" id="GO:0006450">
    <property type="term" value="P:regulation of translational fidelity"/>
    <property type="evidence" value="ECO:0007669"/>
    <property type="project" value="InterPro"/>
</dbReference>
<dbReference type="GO" id="GO:0006412">
    <property type="term" value="P:translation"/>
    <property type="evidence" value="ECO:0007669"/>
    <property type="project" value="UniProtKB-UniRule"/>
</dbReference>
<dbReference type="Gene3D" id="1.10.20.60">
    <property type="entry name" value="Glu-tRNAGln amidotransferase C subunit, N-terminal domain"/>
    <property type="match status" value="1"/>
</dbReference>
<dbReference type="HAMAP" id="MF_00122">
    <property type="entry name" value="GatC"/>
    <property type="match status" value="1"/>
</dbReference>
<dbReference type="InterPro" id="IPR036113">
    <property type="entry name" value="Asp/Glu-ADT_sf_sub_c"/>
</dbReference>
<dbReference type="InterPro" id="IPR003837">
    <property type="entry name" value="GatC"/>
</dbReference>
<dbReference type="NCBIfam" id="TIGR00135">
    <property type="entry name" value="gatC"/>
    <property type="match status" value="1"/>
</dbReference>
<dbReference type="PANTHER" id="PTHR15004">
    <property type="entry name" value="GLUTAMYL-TRNA(GLN) AMIDOTRANSFERASE SUBUNIT C, MITOCHONDRIAL"/>
    <property type="match status" value="1"/>
</dbReference>
<dbReference type="PANTHER" id="PTHR15004:SF0">
    <property type="entry name" value="GLUTAMYL-TRNA(GLN) AMIDOTRANSFERASE SUBUNIT C, MITOCHONDRIAL"/>
    <property type="match status" value="1"/>
</dbReference>
<dbReference type="Pfam" id="PF02686">
    <property type="entry name" value="GatC"/>
    <property type="match status" value="1"/>
</dbReference>
<dbReference type="SUPFAM" id="SSF141000">
    <property type="entry name" value="Glu-tRNAGln amidotransferase C subunit"/>
    <property type="match status" value="1"/>
</dbReference>
<organism>
    <name type="scientific">Streptococcus agalactiae serotype V (strain ATCC BAA-611 / 2603 V/R)</name>
    <dbReference type="NCBI Taxonomy" id="208435"/>
    <lineage>
        <taxon>Bacteria</taxon>
        <taxon>Bacillati</taxon>
        <taxon>Bacillota</taxon>
        <taxon>Bacilli</taxon>
        <taxon>Lactobacillales</taxon>
        <taxon>Streptococcaceae</taxon>
        <taxon>Streptococcus</taxon>
    </lineage>
</organism>
<protein>
    <recommendedName>
        <fullName evidence="1">Aspartyl/glutamyl-tRNA(Asn/Gln) amidotransferase subunit C</fullName>
        <shortName evidence="1">Asp/Glu-ADT subunit C</shortName>
        <ecNumber evidence="1">6.3.5.-</ecNumber>
    </recommendedName>
</protein>
<accession>Q8DY24</accession>
<gene>
    <name evidence="1" type="primary">gatC</name>
    <name type="ordered locus">SAG1669</name>
</gene>
<feature type="chain" id="PRO_0000105339" description="Aspartyl/glutamyl-tRNA(Asn/Gln) amidotransferase subunit C">
    <location>
        <begin position="1"/>
        <end position="100"/>
    </location>
</feature>
<proteinExistence type="inferred from homology"/>
<sequence length="100" mass="11347">MKISEEEVRHVANLSKLRFSDQETKEFASSLSKIVDMIELLNEVDTEGVPVTTTMADRKTVMREDIAQPGHNRDDLFKNVPQHQDYYIKVPAILEDGGDA</sequence>